<evidence type="ECO:0000255" key="1">
    <source>
        <dbReference type="HAMAP-Rule" id="MF_00127"/>
    </source>
</evidence>
<sequence>MSGLPDHLRRPVRGMRDWLPPQYYALRHMEEVLCKVAESFGYRRVETPVVEHFEVLAKKAGQDVINEIYYFKDKAGRDLGLRFDMTVPVARVLSYNLELPRPVRWYYFTKVFRYDEPQHGRYREFYQFGVELVGSSSPRADAEVIQLLIASLEAAGASNFYVRINDRRAVDKLLEHLGVAPYRDIIYKALDKKLKLPREDVIKIMTGGGVSKEIAEEIYNTATEITIQEAVELLYKLDKALGASYEKIVKYLEASVPMERLKFDMSIVRGLDYYTGIVFEAFVGEYKLAVGGGGRYDDLLELYSGVKTPALGFAIGVERLMEAVGIQNVERPLDYYIYIFDDDAYKYAAAVAKKLRTEGYSVVVELGEKGLKDAFEYALKVGARHIIIIGRKELEKGVIKVRDLEKRIEVEKPLSQFLA</sequence>
<name>SYH_PYRAE</name>
<accession>Q8ZWZ1</accession>
<organism>
    <name type="scientific">Pyrobaculum aerophilum (strain ATCC 51768 / DSM 7523 / JCM 9630 / CIP 104966 / NBRC 100827 / IM2)</name>
    <dbReference type="NCBI Taxonomy" id="178306"/>
    <lineage>
        <taxon>Archaea</taxon>
        <taxon>Thermoproteota</taxon>
        <taxon>Thermoprotei</taxon>
        <taxon>Thermoproteales</taxon>
        <taxon>Thermoproteaceae</taxon>
        <taxon>Pyrobaculum</taxon>
    </lineage>
</organism>
<comment type="catalytic activity">
    <reaction evidence="1">
        <text>tRNA(His) + L-histidine + ATP = L-histidyl-tRNA(His) + AMP + diphosphate + H(+)</text>
        <dbReference type="Rhea" id="RHEA:17313"/>
        <dbReference type="Rhea" id="RHEA-COMP:9665"/>
        <dbReference type="Rhea" id="RHEA-COMP:9689"/>
        <dbReference type="ChEBI" id="CHEBI:15378"/>
        <dbReference type="ChEBI" id="CHEBI:30616"/>
        <dbReference type="ChEBI" id="CHEBI:33019"/>
        <dbReference type="ChEBI" id="CHEBI:57595"/>
        <dbReference type="ChEBI" id="CHEBI:78442"/>
        <dbReference type="ChEBI" id="CHEBI:78527"/>
        <dbReference type="ChEBI" id="CHEBI:456215"/>
        <dbReference type="EC" id="6.1.1.21"/>
    </reaction>
</comment>
<comment type="subcellular location">
    <subcellularLocation>
        <location evidence="1">Cytoplasm</location>
    </subcellularLocation>
</comment>
<comment type="similarity">
    <text evidence="1">Belongs to the class-II aminoacyl-tRNA synthetase family.</text>
</comment>
<protein>
    <recommendedName>
        <fullName evidence="1">Histidine--tRNA ligase</fullName>
        <ecNumber evidence="1">6.1.1.21</ecNumber>
    </recommendedName>
    <alternativeName>
        <fullName evidence="1">Histidyl-tRNA synthetase</fullName>
        <shortName evidence="1">HisRS</shortName>
    </alternativeName>
</protein>
<proteinExistence type="inferred from homology"/>
<dbReference type="EC" id="6.1.1.21" evidence="1"/>
<dbReference type="EMBL" id="AE009441">
    <property type="protein sequence ID" value="AAL63558.1"/>
    <property type="molecule type" value="Genomic_DNA"/>
</dbReference>
<dbReference type="SMR" id="Q8ZWZ1"/>
<dbReference type="FunCoup" id="Q8ZWZ1">
    <property type="interactions" value="197"/>
</dbReference>
<dbReference type="STRING" id="178306.PAE1553"/>
<dbReference type="EnsemblBacteria" id="AAL63558">
    <property type="protein sequence ID" value="AAL63558"/>
    <property type="gene ID" value="PAE1553"/>
</dbReference>
<dbReference type="KEGG" id="pai:PAE1553"/>
<dbReference type="PATRIC" id="fig|178306.9.peg.1148"/>
<dbReference type="eggNOG" id="arCOG00404">
    <property type="taxonomic scope" value="Archaea"/>
</dbReference>
<dbReference type="HOGENOM" id="CLU_025113_3_0_2"/>
<dbReference type="InParanoid" id="Q8ZWZ1"/>
<dbReference type="Proteomes" id="UP000002439">
    <property type="component" value="Chromosome"/>
</dbReference>
<dbReference type="GO" id="GO:0005737">
    <property type="term" value="C:cytoplasm"/>
    <property type="evidence" value="ECO:0007669"/>
    <property type="project" value="UniProtKB-SubCell"/>
</dbReference>
<dbReference type="GO" id="GO:0005524">
    <property type="term" value="F:ATP binding"/>
    <property type="evidence" value="ECO:0007669"/>
    <property type="project" value="UniProtKB-UniRule"/>
</dbReference>
<dbReference type="GO" id="GO:0004821">
    <property type="term" value="F:histidine-tRNA ligase activity"/>
    <property type="evidence" value="ECO:0000318"/>
    <property type="project" value="GO_Central"/>
</dbReference>
<dbReference type="GO" id="GO:0006427">
    <property type="term" value="P:histidyl-tRNA aminoacylation"/>
    <property type="evidence" value="ECO:0000318"/>
    <property type="project" value="GO_Central"/>
</dbReference>
<dbReference type="GO" id="GO:0000105">
    <property type="term" value="P:L-histidine biosynthetic process"/>
    <property type="evidence" value="ECO:0007669"/>
    <property type="project" value="InterPro"/>
</dbReference>
<dbReference type="CDD" id="cd00773">
    <property type="entry name" value="HisRS-like_core"/>
    <property type="match status" value="1"/>
</dbReference>
<dbReference type="FunFam" id="3.30.930.10:FF:000121">
    <property type="entry name" value="Histidine--tRNA ligase"/>
    <property type="match status" value="1"/>
</dbReference>
<dbReference type="FunFam" id="3.40.50.800:FF:000017">
    <property type="entry name" value="Histidine--tRNA ligase chloroplastic/mitochondrial"/>
    <property type="match status" value="1"/>
</dbReference>
<dbReference type="Gene3D" id="3.40.50.800">
    <property type="entry name" value="Anticodon-binding domain"/>
    <property type="match status" value="1"/>
</dbReference>
<dbReference type="Gene3D" id="3.30.930.10">
    <property type="entry name" value="Bira Bifunctional Protein, Domain 2"/>
    <property type="match status" value="1"/>
</dbReference>
<dbReference type="HAMAP" id="MF_00127">
    <property type="entry name" value="His_tRNA_synth"/>
    <property type="match status" value="1"/>
</dbReference>
<dbReference type="HAMAP" id="MF_00125">
    <property type="entry name" value="HisZ"/>
    <property type="match status" value="1"/>
</dbReference>
<dbReference type="InterPro" id="IPR006195">
    <property type="entry name" value="aa-tRNA-synth_II"/>
</dbReference>
<dbReference type="InterPro" id="IPR045864">
    <property type="entry name" value="aa-tRNA-synth_II/BPL/LPL"/>
</dbReference>
<dbReference type="InterPro" id="IPR004154">
    <property type="entry name" value="Anticodon-bd"/>
</dbReference>
<dbReference type="InterPro" id="IPR036621">
    <property type="entry name" value="Anticodon-bd_dom_sf"/>
</dbReference>
<dbReference type="InterPro" id="IPR015807">
    <property type="entry name" value="His-tRNA-ligase"/>
</dbReference>
<dbReference type="InterPro" id="IPR041715">
    <property type="entry name" value="HisRS-like_core"/>
</dbReference>
<dbReference type="InterPro" id="IPR004516">
    <property type="entry name" value="HisRS/HisZ"/>
</dbReference>
<dbReference type="InterPro" id="IPR004517">
    <property type="entry name" value="HisZ"/>
</dbReference>
<dbReference type="NCBIfam" id="TIGR00442">
    <property type="entry name" value="hisS"/>
    <property type="match status" value="1"/>
</dbReference>
<dbReference type="PANTHER" id="PTHR43707:SF1">
    <property type="entry name" value="HISTIDINE--TRNA LIGASE, MITOCHONDRIAL-RELATED"/>
    <property type="match status" value="1"/>
</dbReference>
<dbReference type="PANTHER" id="PTHR43707">
    <property type="entry name" value="HISTIDYL-TRNA SYNTHETASE"/>
    <property type="match status" value="1"/>
</dbReference>
<dbReference type="Pfam" id="PF03129">
    <property type="entry name" value="HGTP_anticodon"/>
    <property type="match status" value="1"/>
</dbReference>
<dbReference type="Pfam" id="PF13393">
    <property type="entry name" value="tRNA-synt_His"/>
    <property type="match status" value="1"/>
</dbReference>
<dbReference type="PIRSF" id="PIRSF001549">
    <property type="entry name" value="His-tRNA_synth"/>
    <property type="match status" value="1"/>
</dbReference>
<dbReference type="SUPFAM" id="SSF52954">
    <property type="entry name" value="Class II aaRS ABD-related"/>
    <property type="match status" value="1"/>
</dbReference>
<dbReference type="SUPFAM" id="SSF55681">
    <property type="entry name" value="Class II aaRS and biotin synthetases"/>
    <property type="match status" value="1"/>
</dbReference>
<dbReference type="PROSITE" id="PS50862">
    <property type="entry name" value="AA_TRNA_LIGASE_II"/>
    <property type="match status" value="1"/>
</dbReference>
<gene>
    <name evidence="1" type="primary">hisS</name>
    <name type="ordered locus">PAE1553</name>
</gene>
<keyword id="KW-0030">Aminoacyl-tRNA synthetase</keyword>
<keyword id="KW-0067">ATP-binding</keyword>
<keyword id="KW-0963">Cytoplasm</keyword>
<keyword id="KW-0436">Ligase</keyword>
<keyword id="KW-0547">Nucleotide-binding</keyword>
<keyword id="KW-0648">Protein biosynthesis</keyword>
<keyword id="KW-1185">Reference proteome</keyword>
<reference key="1">
    <citation type="journal article" date="2002" name="Proc. Natl. Acad. Sci. U.S.A.">
        <title>Genome sequence of the hyperthermophilic crenarchaeon Pyrobaculum aerophilum.</title>
        <authorList>
            <person name="Fitz-Gibbon S.T."/>
            <person name="Ladner H."/>
            <person name="Kim U.-J."/>
            <person name="Stetter K.O."/>
            <person name="Simon M.I."/>
            <person name="Miller J.H."/>
        </authorList>
    </citation>
    <scope>NUCLEOTIDE SEQUENCE [LARGE SCALE GENOMIC DNA]</scope>
    <source>
        <strain>ATCC 51768 / DSM 7523 / JCM 9630 / CIP 104966 / NBRC 100827 / IM2</strain>
    </source>
</reference>
<feature type="chain" id="PRO_0000136320" description="Histidine--tRNA ligase">
    <location>
        <begin position="1"/>
        <end position="419"/>
    </location>
</feature>